<protein>
    <recommendedName>
        <fullName>Deoxyguanosine kinase</fullName>
        <shortName>DGK</shortName>
        <shortName>DGUO kinase</shortName>
        <ecNumber>2.7.1.113</ecNumber>
    </recommendedName>
    <alternativeName>
        <fullName>Deoxynucleoside kinase complex I F-component</fullName>
    </alternativeName>
</protein>
<comment type="function">
    <text evidence="1">DGK/DAK plays an essential role in generating the deoxyribonucleotide precursors, dGTP and dATP, for DNA metabolism.</text>
</comment>
<comment type="catalytic activity">
    <reaction>
        <text>2'-deoxyguanosine + ATP = dGMP + ADP + H(+)</text>
        <dbReference type="Rhea" id="RHEA:19201"/>
        <dbReference type="ChEBI" id="CHEBI:15378"/>
        <dbReference type="ChEBI" id="CHEBI:17172"/>
        <dbReference type="ChEBI" id="CHEBI:30616"/>
        <dbReference type="ChEBI" id="CHEBI:57673"/>
        <dbReference type="ChEBI" id="CHEBI:456216"/>
        <dbReference type="EC" id="2.7.1.113"/>
    </reaction>
</comment>
<comment type="subunit">
    <text evidence="1">Heterodimer of a deoxyadenosine (DAK) and a deoxyguanosine kinase (DGK).</text>
</comment>
<comment type="similarity">
    <text evidence="3">Belongs to the DCK/DGK family.</text>
</comment>
<gene>
    <name type="ordered locus">LBA1950</name>
</gene>
<sequence length="228" mass="26691">MTVIVLSGPIGAGKSSLTGILSKYLGTKPFYESVDDNPVLPLFYADPKKYAFLLQVYFLNTRFHSIKNALTQDNNVLDRSIYEDALFFQMNADIGRATSEEVDTYYELLHNMMGELDRMPKKNPDLLVHINVSYDTMIKRIKKRGRPYEQLSYDSTLEDYYKRLLRYYKPWYEKYDYSPKMVIDGDKYDFMSSEADREIVLDQIVDKLKEVGKLPMDWDKSTDIQIEA</sequence>
<dbReference type="EC" id="2.7.1.113"/>
<dbReference type="EMBL" id="CP000033">
    <property type="protein sequence ID" value="AAV43745.1"/>
    <property type="molecule type" value="Genomic_DNA"/>
</dbReference>
<dbReference type="RefSeq" id="WP_003549464.1">
    <property type="nucleotide sequence ID" value="NC_006814.3"/>
</dbReference>
<dbReference type="RefSeq" id="YP_194776.1">
    <property type="nucleotide sequence ID" value="NC_006814.3"/>
</dbReference>
<dbReference type="SMR" id="P0C1G0"/>
<dbReference type="STRING" id="272621.LBA1950"/>
<dbReference type="KEGG" id="lac:LBA1950"/>
<dbReference type="PATRIC" id="fig|272621.13.peg.1854"/>
<dbReference type="eggNOG" id="COG1428">
    <property type="taxonomic scope" value="Bacteria"/>
</dbReference>
<dbReference type="HOGENOM" id="CLU_030466_2_1_9"/>
<dbReference type="OrthoDB" id="9776634at2"/>
<dbReference type="BioCyc" id="LACI272621:G1G49-1901-MONOMER"/>
<dbReference type="Proteomes" id="UP000006381">
    <property type="component" value="Chromosome"/>
</dbReference>
<dbReference type="GO" id="GO:0005737">
    <property type="term" value="C:cytoplasm"/>
    <property type="evidence" value="ECO:0007669"/>
    <property type="project" value="TreeGrafter"/>
</dbReference>
<dbReference type="GO" id="GO:0005524">
    <property type="term" value="F:ATP binding"/>
    <property type="evidence" value="ECO:0007669"/>
    <property type="project" value="UniProtKB-KW"/>
</dbReference>
<dbReference type="GO" id="GO:0004138">
    <property type="term" value="F:deoxyguanosine kinase activity"/>
    <property type="evidence" value="ECO:0007669"/>
    <property type="project" value="UniProtKB-EC"/>
</dbReference>
<dbReference type="CDD" id="cd01673">
    <property type="entry name" value="dNK"/>
    <property type="match status" value="1"/>
</dbReference>
<dbReference type="Gene3D" id="3.40.50.300">
    <property type="entry name" value="P-loop containing nucleotide triphosphate hydrolases"/>
    <property type="match status" value="1"/>
</dbReference>
<dbReference type="InterPro" id="IPR002624">
    <property type="entry name" value="DCK/DGK"/>
</dbReference>
<dbReference type="InterPro" id="IPR050566">
    <property type="entry name" value="Deoxyribonucleoside_kinase"/>
</dbReference>
<dbReference type="InterPro" id="IPR031314">
    <property type="entry name" value="DNK_dom"/>
</dbReference>
<dbReference type="InterPro" id="IPR027417">
    <property type="entry name" value="P-loop_NTPase"/>
</dbReference>
<dbReference type="PANTHER" id="PTHR10513:SF35">
    <property type="entry name" value="DEOXYADENOSINE KINASE"/>
    <property type="match status" value="1"/>
</dbReference>
<dbReference type="PANTHER" id="PTHR10513">
    <property type="entry name" value="DEOXYNUCLEOSIDE KINASE"/>
    <property type="match status" value="1"/>
</dbReference>
<dbReference type="Pfam" id="PF01712">
    <property type="entry name" value="dNK"/>
    <property type="match status" value="1"/>
</dbReference>
<dbReference type="PIRSF" id="PIRSF000705">
    <property type="entry name" value="DNK"/>
    <property type="match status" value="1"/>
</dbReference>
<dbReference type="SUPFAM" id="SSF52540">
    <property type="entry name" value="P-loop containing nucleoside triphosphate hydrolases"/>
    <property type="match status" value="1"/>
</dbReference>
<name>DGK2_LACAC</name>
<accession>P0C1G0</accession>
<accession>Q59484</accession>
<accession>Q5FHS9</accession>
<keyword id="KW-0067">ATP-binding</keyword>
<keyword id="KW-0418">Kinase</keyword>
<keyword id="KW-0547">Nucleotide-binding</keyword>
<keyword id="KW-1185">Reference proteome</keyword>
<keyword id="KW-0808">Transferase</keyword>
<feature type="initiator methionine" description="Removed" evidence="1">
    <location>
        <position position="1"/>
    </location>
</feature>
<feature type="chain" id="PRO_0000175096" description="Deoxyguanosine kinase">
    <location>
        <begin position="2"/>
        <end position="228"/>
    </location>
</feature>
<feature type="active site" description="Proton acceptor" evidence="2">
    <location>
        <position position="78"/>
    </location>
</feature>
<feature type="binding site" evidence="1">
    <location>
        <begin position="8"/>
        <end position="16"/>
    </location>
    <ligand>
        <name>ATP</name>
        <dbReference type="ChEBI" id="CHEBI:30616"/>
    </ligand>
</feature>
<feature type="binding site" evidence="1">
    <location>
        <position position="32"/>
    </location>
    <ligand>
        <name>substrate</name>
    </ligand>
</feature>
<feature type="binding site" evidence="1">
    <location>
        <position position="44"/>
    </location>
    <ligand>
        <name>substrate</name>
    </ligand>
</feature>
<feature type="binding site" evidence="1">
    <location>
        <position position="55"/>
    </location>
    <ligand>
        <name>substrate</name>
    </ligand>
</feature>
<feature type="binding site" evidence="1">
    <location>
        <position position="79"/>
    </location>
    <ligand>
        <name>substrate</name>
    </ligand>
</feature>
<feature type="binding site" evidence="1">
    <location>
        <position position="84"/>
    </location>
    <ligand>
        <name>substrate</name>
    </ligand>
</feature>
<feature type="binding site" evidence="1">
    <location>
        <position position="149"/>
    </location>
    <ligand>
        <name>substrate</name>
    </ligand>
</feature>
<proteinExistence type="inferred from homology"/>
<reference key="1">
    <citation type="journal article" date="2005" name="Proc. Natl. Acad. Sci. U.S.A.">
        <title>Complete genome sequence of the probiotic lactic acid bacterium Lactobacillus acidophilus NCFM.</title>
        <authorList>
            <person name="Altermann E."/>
            <person name="Russell W.M."/>
            <person name="Azcarate-Peril M.A."/>
            <person name="Barrangou R."/>
            <person name="Buck B.L."/>
            <person name="McAuliffe O."/>
            <person name="Souther N."/>
            <person name="Dobson A."/>
            <person name="Duong T."/>
            <person name="Callanan M."/>
            <person name="Lick S."/>
            <person name="Hamrick A."/>
            <person name="Cano R."/>
            <person name="Klaenhammer T.R."/>
        </authorList>
    </citation>
    <scope>NUCLEOTIDE SEQUENCE [LARGE SCALE GENOMIC DNA]</scope>
    <source>
        <strain>ATCC 700396 / NCK56 / N2 / NCFM</strain>
    </source>
</reference>
<organism>
    <name type="scientific">Lactobacillus acidophilus (strain ATCC 700396 / NCK56 / N2 / NCFM)</name>
    <dbReference type="NCBI Taxonomy" id="272621"/>
    <lineage>
        <taxon>Bacteria</taxon>
        <taxon>Bacillati</taxon>
        <taxon>Bacillota</taxon>
        <taxon>Bacilli</taxon>
        <taxon>Lactobacillales</taxon>
        <taxon>Lactobacillaceae</taxon>
        <taxon>Lactobacillus</taxon>
    </lineage>
</organism>
<evidence type="ECO:0000250" key="1"/>
<evidence type="ECO:0000255" key="2"/>
<evidence type="ECO:0000305" key="3"/>